<proteinExistence type="inferred from homology"/>
<comment type="catalytic activity">
    <reaction>
        <text>2 pyruvate + H(+) = (2S)-2-acetolactate + CO2</text>
        <dbReference type="Rhea" id="RHEA:25249"/>
        <dbReference type="ChEBI" id="CHEBI:15361"/>
        <dbReference type="ChEBI" id="CHEBI:15378"/>
        <dbReference type="ChEBI" id="CHEBI:16526"/>
        <dbReference type="ChEBI" id="CHEBI:58476"/>
        <dbReference type="EC" id="2.2.1.6"/>
    </reaction>
</comment>
<comment type="cofactor">
    <cofactor evidence="1">
        <name>Mg(2+)</name>
        <dbReference type="ChEBI" id="CHEBI:18420"/>
    </cofactor>
    <text evidence="1">Binds 1 Mg(2+) ion per subunit.</text>
</comment>
<comment type="cofactor">
    <cofactor evidence="1">
        <name>thiamine diphosphate</name>
        <dbReference type="ChEBI" id="CHEBI:58937"/>
    </cofactor>
    <text evidence="1">Binds 1 thiamine pyrophosphate per subunit.</text>
</comment>
<comment type="pathway">
    <text>Amino-acid biosynthesis; L-isoleucine biosynthesis; L-isoleucine from 2-oxobutanoate: step 1/4.</text>
</comment>
<comment type="pathway">
    <text>Amino-acid biosynthesis; L-valine biosynthesis; L-valine from pyruvate: step 1/4.</text>
</comment>
<comment type="subunit">
    <text evidence="1">Dimer of large and small chains.</text>
</comment>
<comment type="similarity">
    <text evidence="2">Belongs to the TPP enzyme family.</text>
</comment>
<protein>
    <recommendedName>
        <fullName>Probable acetolactate synthase large subunit</fullName>
        <shortName>AHAS</shortName>
        <ecNumber>2.2.1.6</ecNumber>
    </recommendedName>
    <alternativeName>
        <fullName>Acetohydroxy-acid synthase large subunit</fullName>
        <shortName>ALS</shortName>
    </alternativeName>
</protein>
<reference key="1">
    <citation type="journal article" date="1997" name="Gene">
        <title>Cloning and phylogenetic analysis of the genes encoding acetohydroxyacid synthase from the archaeon Methanococcus aeolicus.</title>
        <authorList>
            <person name="Bowen T.L."/>
            <person name="Union J."/>
            <person name="Tumbula D.L."/>
            <person name="Whitman W.B."/>
        </authorList>
    </citation>
    <scope>NUCLEOTIDE SEQUENCE [GENOMIC DNA]</scope>
</reference>
<evidence type="ECO:0000250" key="1"/>
<evidence type="ECO:0000305" key="2"/>
<sequence>MNGAEAMIKALEAEKVEILFGYPGGALLPFYDALHHSDLIHLLTRHEQAAAHAADGYARASGKVGVCIGTSGPGATNLVTGVATAHSDSSPMVALTGQVPTKLIGNDAFQEIDALGLFMPIVKHNFQIQKTCQIPEIFRSAFEIAQTGRPGPVHIDLPKDVQELELDIDKHPIPSKVKLIGYNPTTIGHPRQIKKAIKLIASAKRPIILAGGGVLLSGANEELLKLVELLNIPVCTTLMGKGCISENHPLALGMVGMHGTKPANYCLSESDVLISIGCRFSDRITGDIKSFATNAKIIHIDIDPAEIGKNVNVDVPIVGDAKLILKEVIKQLDYIINKDSKENNDKENISQWIENVNSLKKSSIPVMDYDDIPIKPQKIVKELMAVIDDLNINKNTIITTDVGQNQMWMAHYFKTQTPRSFLSSGGLGTMGFGFPSAIGAKVAKPDSKVICITGDGGFMMNCQELGTIAEYNIPVVICIFDNRTLGMVYQWQNLFYGKRQCSVNFGGAPDFIKLAESYGIKARRIESPNEINEALKEAINCDEPYLLDFAIDPSSALSMVPPGAKLTNIIDAVQEHPNEKIVCFDEIKRRYMENKRNRK</sequence>
<dbReference type="EC" id="2.2.1.6"/>
<dbReference type="EMBL" id="U35458">
    <property type="protein sequence ID" value="AAB53488.1"/>
    <property type="molecule type" value="Genomic_DNA"/>
</dbReference>
<dbReference type="RefSeq" id="WP_262289607.1">
    <property type="nucleotide sequence ID" value="NZ_CP104873.1"/>
</dbReference>
<dbReference type="SMR" id="O08353"/>
<dbReference type="GeneID" id="75305758"/>
<dbReference type="BioCyc" id="MetaCyc:MONOMER-11900"/>
<dbReference type="UniPathway" id="UPA00047">
    <property type="reaction ID" value="UER00055"/>
</dbReference>
<dbReference type="UniPathway" id="UPA00049">
    <property type="reaction ID" value="UER00059"/>
</dbReference>
<dbReference type="GO" id="GO:0005948">
    <property type="term" value="C:acetolactate synthase complex"/>
    <property type="evidence" value="ECO:0007669"/>
    <property type="project" value="TreeGrafter"/>
</dbReference>
<dbReference type="GO" id="GO:0003984">
    <property type="term" value="F:acetolactate synthase activity"/>
    <property type="evidence" value="ECO:0007669"/>
    <property type="project" value="UniProtKB-EC"/>
</dbReference>
<dbReference type="GO" id="GO:0050660">
    <property type="term" value="F:flavin adenine dinucleotide binding"/>
    <property type="evidence" value="ECO:0007669"/>
    <property type="project" value="InterPro"/>
</dbReference>
<dbReference type="GO" id="GO:0000287">
    <property type="term" value="F:magnesium ion binding"/>
    <property type="evidence" value="ECO:0007669"/>
    <property type="project" value="InterPro"/>
</dbReference>
<dbReference type="GO" id="GO:0030976">
    <property type="term" value="F:thiamine pyrophosphate binding"/>
    <property type="evidence" value="ECO:0007669"/>
    <property type="project" value="InterPro"/>
</dbReference>
<dbReference type="GO" id="GO:0009097">
    <property type="term" value="P:isoleucine biosynthetic process"/>
    <property type="evidence" value="ECO:0007669"/>
    <property type="project" value="UniProtKB-UniPathway"/>
</dbReference>
<dbReference type="GO" id="GO:0009099">
    <property type="term" value="P:L-valine biosynthetic process"/>
    <property type="evidence" value="ECO:0007669"/>
    <property type="project" value="UniProtKB-UniPathway"/>
</dbReference>
<dbReference type="GO" id="GO:0044272">
    <property type="term" value="P:sulfur compound biosynthetic process"/>
    <property type="evidence" value="ECO:0007669"/>
    <property type="project" value="UniProtKB-ARBA"/>
</dbReference>
<dbReference type="CDD" id="cd02015">
    <property type="entry name" value="TPP_AHAS"/>
    <property type="match status" value="1"/>
</dbReference>
<dbReference type="CDD" id="cd07035">
    <property type="entry name" value="TPP_PYR_POX_like"/>
    <property type="match status" value="1"/>
</dbReference>
<dbReference type="FunFam" id="3.40.50.1220:FF:000008">
    <property type="entry name" value="Acetolactate synthase"/>
    <property type="match status" value="1"/>
</dbReference>
<dbReference type="FunFam" id="3.40.50.970:FF:000007">
    <property type="entry name" value="Acetolactate synthase"/>
    <property type="match status" value="1"/>
</dbReference>
<dbReference type="FunFam" id="3.40.50.970:FF:000016">
    <property type="entry name" value="Acetolactate synthase"/>
    <property type="match status" value="1"/>
</dbReference>
<dbReference type="Gene3D" id="3.40.50.970">
    <property type="match status" value="2"/>
</dbReference>
<dbReference type="Gene3D" id="3.40.50.1220">
    <property type="entry name" value="TPP-binding domain"/>
    <property type="match status" value="1"/>
</dbReference>
<dbReference type="InterPro" id="IPR012846">
    <property type="entry name" value="Acetolactate_synth_lsu"/>
</dbReference>
<dbReference type="InterPro" id="IPR039368">
    <property type="entry name" value="AHAS_TPP"/>
</dbReference>
<dbReference type="InterPro" id="IPR029035">
    <property type="entry name" value="DHS-like_NAD/FAD-binding_dom"/>
</dbReference>
<dbReference type="InterPro" id="IPR029061">
    <property type="entry name" value="THDP-binding"/>
</dbReference>
<dbReference type="InterPro" id="IPR012000">
    <property type="entry name" value="Thiamin_PyroP_enz_cen_dom"/>
</dbReference>
<dbReference type="InterPro" id="IPR012001">
    <property type="entry name" value="Thiamin_PyroP_enz_TPP-bd_dom"/>
</dbReference>
<dbReference type="InterPro" id="IPR000399">
    <property type="entry name" value="TPP-bd_CS"/>
</dbReference>
<dbReference type="InterPro" id="IPR045229">
    <property type="entry name" value="TPP_enz"/>
</dbReference>
<dbReference type="InterPro" id="IPR011766">
    <property type="entry name" value="TPP_enzyme_TPP-bd"/>
</dbReference>
<dbReference type="NCBIfam" id="TIGR00118">
    <property type="entry name" value="acolac_lg"/>
    <property type="match status" value="1"/>
</dbReference>
<dbReference type="NCBIfam" id="NF004919">
    <property type="entry name" value="PRK06276.1"/>
    <property type="match status" value="1"/>
</dbReference>
<dbReference type="PANTHER" id="PTHR18968:SF13">
    <property type="entry name" value="ACETOLACTATE SYNTHASE CATALYTIC SUBUNIT, MITOCHONDRIAL"/>
    <property type="match status" value="1"/>
</dbReference>
<dbReference type="PANTHER" id="PTHR18968">
    <property type="entry name" value="THIAMINE PYROPHOSPHATE ENZYMES"/>
    <property type="match status" value="1"/>
</dbReference>
<dbReference type="Pfam" id="PF02775">
    <property type="entry name" value="TPP_enzyme_C"/>
    <property type="match status" value="1"/>
</dbReference>
<dbReference type="Pfam" id="PF00205">
    <property type="entry name" value="TPP_enzyme_M"/>
    <property type="match status" value="1"/>
</dbReference>
<dbReference type="Pfam" id="PF02776">
    <property type="entry name" value="TPP_enzyme_N"/>
    <property type="match status" value="1"/>
</dbReference>
<dbReference type="SUPFAM" id="SSF52467">
    <property type="entry name" value="DHS-like NAD/FAD-binding domain"/>
    <property type="match status" value="1"/>
</dbReference>
<dbReference type="SUPFAM" id="SSF52518">
    <property type="entry name" value="Thiamin diphosphate-binding fold (THDP-binding)"/>
    <property type="match status" value="2"/>
</dbReference>
<dbReference type="PROSITE" id="PS00187">
    <property type="entry name" value="TPP_ENZYMES"/>
    <property type="match status" value="1"/>
</dbReference>
<keyword id="KW-0028">Amino-acid biosynthesis</keyword>
<keyword id="KW-0100">Branched-chain amino acid biosynthesis</keyword>
<keyword id="KW-0274">FAD</keyword>
<keyword id="KW-0285">Flavoprotein</keyword>
<keyword id="KW-0460">Magnesium</keyword>
<keyword id="KW-0479">Metal-binding</keyword>
<keyword id="KW-0786">Thiamine pyrophosphate</keyword>
<keyword id="KW-0808">Transferase</keyword>
<name>ILVB_METAO</name>
<organism>
    <name type="scientific">Methanococcus aeolicus</name>
    <dbReference type="NCBI Taxonomy" id="42879"/>
    <lineage>
        <taxon>Archaea</taxon>
        <taxon>Methanobacteriati</taxon>
        <taxon>Methanobacteriota</taxon>
        <taxon>Methanomada group</taxon>
        <taxon>Methanococci</taxon>
        <taxon>Methanococcales</taxon>
        <taxon>Methanococcaceae</taxon>
        <taxon>Methanococcus</taxon>
    </lineage>
</organism>
<feature type="chain" id="PRO_0000090807" description="Probable acetolactate synthase large subunit">
    <location>
        <begin position="1"/>
        <end position="599"/>
    </location>
</feature>
<feature type="region of interest" description="Thiamine pyrophosphate binding">
    <location>
        <begin position="404"/>
        <end position="484"/>
    </location>
</feature>
<feature type="binding site" evidence="1">
    <location>
        <position position="47"/>
    </location>
    <ligand>
        <name>thiamine diphosphate</name>
        <dbReference type="ChEBI" id="CHEBI:58937"/>
    </ligand>
</feature>
<feature type="binding site" evidence="1">
    <location>
        <position position="149"/>
    </location>
    <ligand>
        <name>FAD</name>
        <dbReference type="ChEBI" id="CHEBI:57692"/>
    </ligand>
</feature>
<feature type="binding site" evidence="1">
    <location>
        <begin position="258"/>
        <end position="279"/>
    </location>
    <ligand>
        <name>FAD</name>
        <dbReference type="ChEBI" id="CHEBI:57692"/>
    </ligand>
</feature>
<feature type="binding site" evidence="1">
    <location>
        <begin position="301"/>
        <end position="320"/>
    </location>
    <ligand>
        <name>FAD</name>
        <dbReference type="ChEBI" id="CHEBI:57692"/>
    </ligand>
</feature>
<feature type="binding site" evidence="1">
    <location>
        <position position="455"/>
    </location>
    <ligand>
        <name>Mg(2+)</name>
        <dbReference type="ChEBI" id="CHEBI:18420"/>
    </ligand>
</feature>
<feature type="binding site" evidence="1">
    <location>
        <position position="482"/>
    </location>
    <ligand>
        <name>Mg(2+)</name>
        <dbReference type="ChEBI" id="CHEBI:18420"/>
    </ligand>
</feature>
<gene>
    <name type="primary">ilvB</name>
</gene>
<accession>O08353</accession>